<reference key="1">
    <citation type="journal article" date="2007" name="Nature">
        <title>Evolution of genes and genomes on the Drosophila phylogeny.</title>
        <authorList>
            <consortium name="Drosophila 12 genomes consortium"/>
        </authorList>
    </citation>
    <scope>NUCLEOTIDE SEQUENCE [LARGE SCALE GENOMIC DNA]</scope>
    <source>
        <strain>Tucson 14030-0811.24</strain>
    </source>
</reference>
<proteinExistence type="inferred from homology"/>
<keyword id="KW-0251">Elongation factor</keyword>
<keyword id="KW-0342">GTP-binding</keyword>
<keyword id="KW-0496">Mitochondrion</keyword>
<keyword id="KW-0547">Nucleotide-binding</keyword>
<keyword id="KW-0648">Protein biosynthesis</keyword>
<keyword id="KW-1185">Reference proteome</keyword>
<name>EFGM_DROWI</name>
<comment type="function">
    <text evidence="2">Mitochondrial GTPase that catalyzes the GTP-dependent ribosomal translocation step during translation elongation. During this step, the ribosome changes from the pre-translocational (PRE) to the post-translocational (POST) state as the newly formed A-site-bound peptidyl-tRNA and P-site-bound deacylated tRNA move to the P and E sites, respectively. Catalyzes the coordinated movement of the two tRNA molecules, the mRNA and conformational changes in the ribosome. Essential during development as it acts as a retrograde signal from mitochondria to the nucleus to slow down cell proliferation if mitochondrial energy output is low (By similarity).</text>
</comment>
<comment type="pathway">
    <text evidence="2">Protein biosynthesis; polypeptide chain elongation.</text>
</comment>
<comment type="subcellular location">
    <subcellularLocation>
        <location evidence="2">Mitochondrion</location>
    </subcellularLocation>
</comment>
<comment type="miscellaneous">
    <text evidence="2">This protein may be expected to contain an N-terminal transit peptide but none has been predicted.</text>
</comment>
<comment type="similarity">
    <text evidence="3">Belongs to the TRAFAC class translation factor GTPase superfamily. Classic translation factor GTPase family. EF-G/EF-2 subfamily.</text>
</comment>
<organism>
    <name type="scientific">Drosophila willistoni</name>
    <name type="common">Fruit fly</name>
    <dbReference type="NCBI Taxonomy" id="7260"/>
    <lineage>
        <taxon>Eukaryota</taxon>
        <taxon>Metazoa</taxon>
        <taxon>Ecdysozoa</taxon>
        <taxon>Arthropoda</taxon>
        <taxon>Hexapoda</taxon>
        <taxon>Insecta</taxon>
        <taxon>Pterygota</taxon>
        <taxon>Neoptera</taxon>
        <taxon>Endopterygota</taxon>
        <taxon>Diptera</taxon>
        <taxon>Brachycera</taxon>
        <taxon>Muscomorpha</taxon>
        <taxon>Ephydroidea</taxon>
        <taxon>Drosophilidae</taxon>
        <taxon>Drosophila</taxon>
        <taxon>Sophophora</taxon>
    </lineage>
</organism>
<protein>
    <recommendedName>
        <fullName evidence="2">Elongation factor G, mitochondrial</fullName>
        <shortName evidence="2">EF-Gmt</shortName>
    </recommendedName>
    <alternativeName>
        <fullName evidence="2">Elongation factor G 1, mitochondrial</fullName>
        <shortName evidence="2">mEF-G 1</shortName>
    </alternativeName>
    <alternativeName>
        <fullName evidence="2">Elongation factor G1</fullName>
    </alternativeName>
</protein>
<accession>B4MZW9</accession>
<dbReference type="EMBL" id="CH963920">
    <property type="protein sequence ID" value="EDW77904.1"/>
    <property type="molecule type" value="Genomic_DNA"/>
</dbReference>
<dbReference type="SMR" id="B4MZW9"/>
<dbReference type="STRING" id="7260.B4MZW9"/>
<dbReference type="EnsemblMetazoa" id="FBtr0255383">
    <property type="protein sequence ID" value="FBpp0253875"/>
    <property type="gene ID" value="FBgn0226692"/>
</dbReference>
<dbReference type="EnsemblMetazoa" id="XM_002066882.3">
    <property type="protein sequence ID" value="XP_002066918.1"/>
    <property type="gene ID" value="LOC6643963"/>
</dbReference>
<dbReference type="GeneID" id="6643963"/>
<dbReference type="KEGG" id="dwi:6643963"/>
<dbReference type="CTD" id="34004"/>
<dbReference type="eggNOG" id="KOG0465">
    <property type="taxonomic scope" value="Eukaryota"/>
</dbReference>
<dbReference type="HOGENOM" id="CLU_002794_4_1_1"/>
<dbReference type="OMA" id="GQFAKVQ"/>
<dbReference type="OrthoDB" id="198619at2759"/>
<dbReference type="PhylomeDB" id="B4MZW9"/>
<dbReference type="UniPathway" id="UPA00345"/>
<dbReference type="Proteomes" id="UP000007798">
    <property type="component" value="Unassembled WGS sequence"/>
</dbReference>
<dbReference type="GO" id="GO:0005739">
    <property type="term" value="C:mitochondrion"/>
    <property type="evidence" value="ECO:0007669"/>
    <property type="project" value="UniProtKB-SubCell"/>
</dbReference>
<dbReference type="GO" id="GO:0005634">
    <property type="term" value="C:nucleus"/>
    <property type="evidence" value="ECO:0007669"/>
    <property type="project" value="EnsemblMetazoa"/>
</dbReference>
<dbReference type="GO" id="GO:0005525">
    <property type="term" value="F:GTP binding"/>
    <property type="evidence" value="ECO:0007669"/>
    <property type="project" value="UniProtKB-UniRule"/>
</dbReference>
<dbReference type="GO" id="GO:0003924">
    <property type="term" value="F:GTPase activity"/>
    <property type="evidence" value="ECO:0000250"/>
    <property type="project" value="UniProtKB"/>
</dbReference>
<dbReference type="GO" id="GO:0003746">
    <property type="term" value="F:translation elongation factor activity"/>
    <property type="evidence" value="ECO:0000250"/>
    <property type="project" value="UniProtKB"/>
</dbReference>
<dbReference type="GO" id="GO:0070125">
    <property type="term" value="P:mitochondrial translational elongation"/>
    <property type="evidence" value="ECO:0000250"/>
    <property type="project" value="UniProtKB"/>
</dbReference>
<dbReference type="CDD" id="cd01886">
    <property type="entry name" value="EF-G"/>
    <property type="match status" value="1"/>
</dbReference>
<dbReference type="CDD" id="cd16262">
    <property type="entry name" value="EFG_III"/>
    <property type="match status" value="1"/>
</dbReference>
<dbReference type="CDD" id="cd01434">
    <property type="entry name" value="EFG_mtEFG1_IV"/>
    <property type="match status" value="1"/>
</dbReference>
<dbReference type="CDD" id="cd04097">
    <property type="entry name" value="mtEFG1_C"/>
    <property type="match status" value="1"/>
</dbReference>
<dbReference type="CDD" id="cd04091">
    <property type="entry name" value="mtEFG1_II_like"/>
    <property type="match status" value="1"/>
</dbReference>
<dbReference type="FunFam" id="3.30.230.10:FF:000003">
    <property type="entry name" value="Elongation factor G"/>
    <property type="match status" value="1"/>
</dbReference>
<dbReference type="FunFam" id="3.30.70.240:FF:000001">
    <property type="entry name" value="Elongation factor G"/>
    <property type="match status" value="1"/>
</dbReference>
<dbReference type="FunFam" id="3.30.70.870:FF:000001">
    <property type="entry name" value="Elongation factor G"/>
    <property type="match status" value="1"/>
</dbReference>
<dbReference type="FunFam" id="2.40.30.10:FF:000022">
    <property type="entry name" value="Elongation factor G, mitochondrial"/>
    <property type="match status" value="1"/>
</dbReference>
<dbReference type="FunFam" id="3.40.50.300:FF:000539">
    <property type="entry name" value="Elongation factor G, mitochondrial"/>
    <property type="match status" value="1"/>
</dbReference>
<dbReference type="Gene3D" id="3.30.230.10">
    <property type="match status" value="1"/>
</dbReference>
<dbReference type="Gene3D" id="3.30.70.240">
    <property type="match status" value="1"/>
</dbReference>
<dbReference type="Gene3D" id="3.30.70.870">
    <property type="entry name" value="Elongation Factor G (Translational Gtpase), domain 3"/>
    <property type="match status" value="1"/>
</dbReference>
<dbReference type="Gene3D" id="3.40.50.300">
    <property type="entry name" value="P-loop containing nucleotide triphosphate hydrolases"/>
    <property type="match status" value="1"/>
</dbReference>
<dbReference type="Gene3D" id="2.40.30.10">
    <property type="entry name" value="Translation factors"/>
    <property type="match status" value="1"/>
</dbReference>
<dbReference type="HAMAP" id="MF_00054_B">
    <property type="entry name" value="EF_G_EF_2_B"/>
    <property type="match status" value="1"/>
</dbReference>
<dbReference type="InterPro" id="IPR041095">
    <property type="entry name" value="EFG_II"/>
</dbReference>
<dbReference type="InterPro" id="IPR009022">
    <property type="entry name" value="EFG_III"/>
</dbReference>
<dbReference type="InterPro" id="IPR035647">
    <property type="entry name" value="EFG_III/V"/>
</dbReference>
<dbReference type="InterPro" id="IPR047872">
    <property type="entry name" value="EFG_IV"/>
</dbReference>
<dbReference type="InterPro" id="IPR035649">
    <property type="entry name" value="EFG_V"/>
</dbReference>
<dbReference type="InterPro" id="IPR000640">
    <property type="entry name" value="EFG_V-like"/>
</dbReference>
<dbReference type="InterPro" id="IPR004161">
    <property type="entry name" value="EFTu-like_2"/>
</dbReference>
<dbReference type="InterPro" id="IPR031157">
    <property type="entry name" value="G_TR_CS"/>
</dbReference>
<dbReference type="InterPro" id="IPR027417">
    <property type="entry name" value="P-loop_NTPase"/>
</dbReference>
<dbReference type="InterPro" id="IPR020568">
    <property type="entry name" value="Ribosomal_Su5_D2-typ_SF"/>
</dbReference>
<dbReference type="InterPro" id="IPR014721">
    <property type="entry name" value="Ribsml_uS5_D2-typ_fold_subgr"/>
</dbReference>
<dbReference type="InterPro" id="IPR005225">
    <property type="entry name" value="Small_GTP-bd"/>
</dbReference>
<dbReference type="InterPro" id="IPR000795">
    <property type="entry name" value="T_Tr_GTP-bd_dom"/>
</dbReference>
<dbReference type="InterPro" id="IPR009000">
    <property type="entry name" value="Transl_B-barrel_sf"/>
</dbReference>
<dbReference type="InterPro" id="IPR004540">
    <property type="entry name" value="Transl_elong_EFG/EF2"/>
</dbReference>
<dbReference type="InterPro" id="IPR005517">
    <property type="entry name" value="Transl_elong_EFG/EF2_IV"/>
</dbReference>
<dbReference type="NCBIfam" id="TIGR00484">
    <property type="entry name" value="EF-G"/>
    <property type="match status" value="1"/>
</dbReference>
<dbReference type="NCBIfam" id="NF009381">
    <property type="entry name" value="PRK12740.1-5"/>
    <property type="match status" value="1"/>
</dbReference>
<dbReference type="NCBIfam" id="TIGR00231">
    <property type="entry name" value="small_GTP"/>
    <property type="match status" value="1"/>
</dbReference>
<dbReference type="PANTHER" id="PTHR43636">
    <property type="entry name" value="ELONGATION FACTOR G, MITOCHONDRIAL"/>
    <property type="match status" value="1"/>
</dbReference>
<dbReference type="PANTHER" id="PTHR43636:SF2">
    <property type="entry name" value="ELONGATION FACTOR G, MITOCHONDRIAL"/>
    <property type="match status" value="1"/>
</dbReference>
<dbReference type="Pfam" id="PF00679">
    <property type="entry name" value="EFG_C"/>
    <property type="match status" value="1"/>
</dbReference>
<dbReference type="Pfam" id="PF14492">
    <property type="entry name" value="EFG_III"/>
    <property type="match status" value="1"/>
</dbReference>
<dbReference type="Pfam" id="PF03764">
    <property type="entry name" value="EFG_IV"/>
    <property type="match status" value="1"/>
</dbReference>
<dbReference type="Pfam" id="PF00009">
    <property type="entry name" value="GTP_EFTU"/>
    <property type="match status" value="1"/>
</dbReference>
<dbReference type="Pfam" id="PF03144">
    <property type="entry name" value="GTP_EFTU_D2"/>
    <property type="match status" value="1"/>
</dbReference>
<dbReference type="PRINTS" id="PR00315">
    <property type="entry name" value="ELONGATNFCT"/>
</dbReference>
<dbReference type="SMART" id="SM00838">
    <property type="entry name" value="EFG_C"/>
    <property type="match status" value="1"/>
</dbReference>
<dbReference type="SMART" id="SM00889">
    <property type="entry name" value="EFG_IV"/>
    <property type="match status" value="1"/>
</dbReference>
<dbReference type="SUPFAM" id="SSF54980">
    <property type="entry name" value="EF-G C-terminal domain-like"/>
    <property type="match status" value="2"/>
</dbReference>
<dbReference type="SUPFAM" id="SSF52540">
    <property type="entry name" value="P-loop containing nucleoside triphosphate hydrolases"/>
    <property type="match status" value="1"/>
</dbReference>
<dbReference type="SUPFAM" id="SSF54211">
    <property type="entry name" value="Ribosomal protein S5 domain 2-like"/>
    <property type="match status" value="1"/>
</dbReference>
<dbReference type="SUPFAM" id="SSF50447">
    <property type="entry name" value="Translation proteins"/>
    <property type="match status" value="1"/>
</dbReference>
<dbReference type="PROSITE" id="PS00301">
    <property type="entry name" value="G_TR_1"/>
    <property type="match status" value="1"/>
</dbReference>
<dbReference type="PROSITE" id="PS51722">
    <property type="entry name" value="G_TR_2"/>
    <property type="match status" value="1"/>
</dbReference>
<sequence>MSLLTRLCKGNVPLRLNTLKHLSQCGYSSHAKFSEHKPIEKIRNIGISAHIDSGKTTLTERILFYTGRIAEMHEVRGKDNVGATMDSMELERQRGITIQSAATYTLWKDTNINIIDTPGHVDFTVEVERALRVLDGAVLVLCAVGGVQSQTLTVNRQMKRYNVPCLAFINKLDRLGSNPYRVLSQMRSKMNHNAAFIQLPIGVESNCKGIVDLVQEKAIYFEGDHGMDIRLDEIPQDMRAESGERRQELIEHLSNADEKFGELFLEEKPFTEKDIKEALRRTCIQRTFTPVLVGTALKNKGVQPLLDAVLDYLPNPGEVENLAFIEHEGKEPEKVVLNPARDGKDPFMGLAFKLEAGRFGQLTYLRCYQGVLRKGDNIFNARTNKKVRIARLVRLHSNQMEDVNEVFAGDIFALFGVDCASGDTFTTNPKNHLAMESIFVPEPVVSMAIKPNNTKDRDNFSKAIARFTKEDPTFHFHFDNDVKETLVSGMGELHLEIYAQRMEREYGCPVTLGKPKVAFRETLVGPCEFDYLHKKQSGGSGQYARIIGIMEPLPPSQNTLLEFVDETVGTNVPKQFIPGVEKGYREMAERGMLSGHKLSGIRFRLQDGGHHIVDSSELAFMLAAHGAIKEVFQNGSWQILEPIMLVEVTAPEEFQGAVMGHLSKRHGIITGTEGTEGWFTVYAEVPLNDMFGYAGELRSSTQGKGEFTMEYSRYSPCLPEVQEQIVRQYQESQGVGQAEKKKKKN</sequence>
<gene>
    <name evidence="1" type="primary">mEFG1</name>
    <name evidence="1" type="synonym">ico</name>
    <name type="ORF">GK24732</name>
</gene>
<evidence type="ECO:0000250" key="1">
    <source>
        <dbReference type="UniProtKB" id="Q9VM33"/>
    </source>
</evidence>
<evidence type="ECO:0000255" key="2">
    <source>
        <dbReference type="HAMAP-Rule" id="MF_03061"/>
    </source>
</evidence>
<evidence type="ECO:0000305" key="3"/>
<feature type="chain" id="PRO_0000385553" description="Elongation factor G, mitochondrial">
    <location>
        <begin position="1"/>
        <end position="745"/>
    </location>
</feature>
<feature type="domain" description="tr-type G">
    <location>
        <begin position="40"/>
        <end position="317"/>
    </location>
</feature>
<feature type="binding site" evidence="2">
    <location>
        <begin position="49"/>
        <end position="56"/>
    </location>
    <ligand>
        <name>GTP</name>
        <dbReference type="ChEBI" id="CHEBI:37565"/>
    </ligand>
</feature>
<feature type="binding site" evidence="2">
    <location>
        <begin position="116"/>
        <end position="120"/>
    </location>
    <ligand>
        <name>GTP</name>
        <dbReference type="ChEBI" id="CHEBI:37565"/>
    </ligand>
</feature>
<feature type="binding site" evidence="2">
    <location>
        <begin position="170"/>
        <end position="173"/>
    </location>
    <ligand>
        <name>GTP</name>
        <dbReference type="ChEBI" id="CHEBI:37565"/>
    </ligand>
</feature>